<name>Y1667_ENT38</name>
<proteinExistence type="inferred from homology"/>
<comment type="subcellular location">
    <subcellularLocation>
        <location evidence="1">Cell membrane</location>
        <topology evidence="1">Multi-pass membrane protein</topology>
    </subcellularLocation>
</comment>
<comment type="similarity">
    <text evidence="1">Belongs to the UPF0756 family.</text>
</comment>
<sequence length="148" mass="15327">MFDPTLLILLALAALGFISHNTTVAISILVLIIVRVTPLNTFFPWIEKQGLTIGIIILTIGVMAPIASGTLPASTLLHSFVNWKSLIAIAVGVFVSWLGGRGVTLMSSQPSLVAGLLVGTVLGVALFRGVPVGPLIAAGLVSLFIGKS</sequence>
<gene>
    <name type="ordered locus">Ent638_1667</name>
</gene>
<dbReference type="EMBL" id="CP000653">
    <property type="protein sequence ID" value="ABP60346.1"/>
    <property type="molecule type" value="Genomic_DNA"/>
</dbReference>
<dbReference type="RefSeq" id="WP_012017062.1">
    <property type="nucleotide sequence ID" value="NC_009436.1"/>
</dbReference>
<dbReference type="GeneID" id="93308755"/>
<dbReference type="KEGG" id="ent:Ent638_1667"/>
<dbReference type="eggNOG" id="COG2707">
    <property type="taxonomic scope" value="Bacteria"/>
</dbReference>
<dbReference type="HOGENOM" id="CLU_125889_0_0_6"/>
<dbReference type="OrthoDB" id="80306at2"/>
<dbReference type="Proteomes" id="UP000000230">
    <property type="component" value="Chromosome"/>
</dbReference>
<dbReference type="GO" id="GO:0005886">
    <property type="term" value="C:plasma membrane"/>
    <property type="evidence" value="ECO:0007669"/>
    <property type="project" value="UniProtKB-SubCell"/>
</dbReference>
<dbReference type="HAMAP" id="MF_01874">
    <property type="entry name" value="UPF0756"/>
    <property type="match status" value="1"/>
</dbReference>
<dbReference type="InterPro" id="IPR007382">
    <property type="entry name" value="UPF0756_TM"/>
</dbReference>
<dbReference type="PANTHER" id="PTHR38452">
    <property type="entry name" value="UPF0756 MEMBRANE PROTEIN YEAL"/>
    <property type="match status" value="1"/>
</dbReference>
<dbReference type="PANTHER" id="PTHR38452:SF1">
    <property type="entry name" value="UPF0756 MEMBRANE PROTEIN YEAL"/>
    <property type="match status" value="1"/>
</dbReference>
<dbReference type="Pfam" id="PF04284">
    <property type="entry name" value="DUF441"/>
    <property type="match status" value="1"/>
</dbReference>
<protein>
    <recommendedName>
        <fullName evidence="1">UPF0756 membrane protein Ent638_1667</fullName>
    </recommendedName>
</protein>
<organism>
    <name type="scientific">Enterobacter sp. (strain 638)</name>
    <dbReference type="NCBI Taxonomy" id="399742"/>
    <lineage>
        <taxon>Bacteria</taxon>
        <taxon>Pseudomonadati</taxon>
        <taxon>Pseudomonadota</taxon>
        <taxon>Gammaproteobacteria</taxon>
        <taxon>Enterobacterales</taxon>
        <taxon>Enterobacteriaceae</taxon>
        <taxon>Enterobacter</taxon>
    </lineage>
</organism>
<keyword id="KW-1003">Cell membrane</keyword>
<keyword id="KW-0472">Membrane</keyword>
<keyword id="KW-0812">Transmembrane</keyword>
<keyword id="KW-1133">Transmembrane helix</keyword>
<accession>A4W9G6</accession>
<reference key="1">
    <citation type="journal article" date="2010" name="PLoS Genet.">
        <title>Genome sequence of the plant growth promoting endophytic bacterium Enterobacter sp. 638.</title>
        <authorList>
            <person name="Taghavi S."/>
            <person name="van der Lelie D."/>
            <person name="Hoffman A."/>
            <person name="Zhang Y.B."/>
            <person name="Walla M.D."/>
            <person name="Vangronsveld J."/>
            <person name="Newman L."/>
            <person name="Monchy S."/>
        </authorList>
    </citation>
    <scope>NUCLEOTIDE SEQUENCE [LARGE SCALE GENOMIC DNA]</scope>
    <source>
        <strain>638</strain>
    </source>
</reference>
<evidence type="ECO:0000255" key="1">
    <source>
        <dbReference type="HAMAP-Rule" id="MF_01874"/>
    </source>
</evidence>
<feature type="chain" id="PRO_5000237849" description="UPF0756 membrane protein Ent638_1667">
    <location>
        <begin position="1"/>
        <end position="148"/>
    </location>
</feature>
<feature type="transmembrane region" description="Helical" evidence="1">
    <location>
        <begin position="14"/>
        <end position="34"/>
    </location>
</feature>
<feature type="transmembrane region" description="Helical" evidence="1">
    <location>
        <begin position="51"/>
        <end position="71"/>
    </location>
</feature>
<feature type="transmembrane region" description="Helical" evidence="1">
    <location>
        <begin position="86"/>
        <end position="106"/>
    </location>
</feature>
<feature type="transmembrane region" description="Helical" evidence="1">
    <location>
        <begin position="121"/>
        <end position="141"/>
    </location>
</feature>